<gene>
    <name type="primary">ADAM28</name>
</gene>
<comment type="function">
    <text>May play a role in the adhesive and proteolytic events that occur during lymphocyte emigration or may function in ectodomain shedding of lymphocyte surface target proteins, such as FASL and CD40L. May be involved in sperm maturation.</text>
</comment>
<comment type="cofactor">
    <cofactor evidence="1">
        <name>Zn(2+)</name>
        <dbReference type="ChEBI" id="CHEBI:29105"/>
    </cofactor>
    <text evidence="1">Binds 1 zinc ion per subunit.</text>
</comment>
<comment type="subcellular location">
    <subcellularLocation>
        <location>Membrane</location>
        <topology>Single-pass type I membrane protein</topology>
    </subcellularLocation>
</comment>
<comment type="tissue specificity">
    <text>Expressed at high levels in epididymis and at lower levels in lung.</text>
</comment>
<comment type="domain">
    <text>The conserved cysteine present in the cysteine-switch motif binds the catalytic zinc ion, thus inhibiting the enzyme. The dissociation of the cysteine from the zinc ion upon the activation-peptide release activates the enzyme.</text>
</comment>
<comment type="PTM">
    <text evidence="1">Pro-domain removal and maturation may be, at least in part, autocatalytic.</text>
</comment>
<keyword id="KW-1015">Disulfide bond</keyword>
<keyword id="KW-0245">EGF-like domain</keyword>
<keyword id="KW-0325">Glycoprotein</keyword>
<keyword id="KW-0378">Hydrolase</keyword>
<keyword id="KW-0472">Membrane</keyword>
<keyword id="KW-0479">Metal-binding</keyword>
<keyword id="KW-0482">Metalloprotease</keyword>
<keyword id="KW-0645">Protease</keyword>
<keyword id="KW-1185">Reference proteome</keyword>
<keyword id="KW-0732">Signal</keyword>
<keyword id="KW-0812">Transmembrane</keyword>
<keyword id="KW-1133">Transmembrane helix</keyword>
<keyword id="KW-0862">Zinc</keyword>
<keyword id="KW-0865">Zymogen</keyword>
<sequence length="776" mass="87214">MLQALLTVSLLLSPVPVSAIKELPGVKKYEVVYPIRLHPLHKREVKEPEQQEQFETELKYKMTVNGKIAVLYLKKNKNLLAPGYTETYYNSTGKEITTSPQIMDDCYYQGHIINEKDSDASISTCRGLRGYFSQGNQRYFIEPLSPIHRDGQEHALFKYDPEEKNYDSTCGTDGVLWVHDLQNIARPATRLVKLNDGKVQKHEKYIEYYLVLDNGEFKKYNENQDEIRKRVFEMANYVNMLYKKLNTHVALVGMEIWTDEDKINITPNASFTLENFSKWRGSVLPRRKRHDIAQLITATEFAGMTVGLAFMSTMCSPYHSVGVVQDHSDNLLRVAGTMAHEMGHNFGMFHDNYSCKCPSTICVMDKALSFYIPTDFSSCSRVSYDKFFEDKLSNCLFNAPLPTDIISTPICGNQMVEMGEDCDCGTSEECTNICCDAKTCKIKAGFQCTSGECCEKCQFKKAGMVCRPAKDECDLPEMCDGKSGNCPDDRFRANGFPCHHGKGYCLMGACPTLQEQCTELWGPGTKVADQSCYNRNEGGSKYGYCRRVDDTLIPCKTNDTMCGKLFCQGGSDNLPWKGRIVTFLTCKTFDPEDTSEEIGMVANGTKCGHNKVCINAECVDIEKAYKSTNCSSKCKGHAVCDHELQCQCEEGWSPPDCDDSSVVFYFSIVVAVLFPVAVISLVVAIVIRQQSSREKQKKDQRPLSTTGTRPHKQKRKPQMVKAVQPQEMSQMKLHVYDLPVEGNEPPASFLISKPDFSPPPIPAPRSSSFLDSNPKA</sequence>
<reference key="1">
    <citation type="journal article" date="1999" name="Mol. Hum. Reprod.">
        <title>Identification, sequence analysis and expression of transcripts encoding a putative metalloproteinase, eMDC II, in human and macaque epididymis.</title>
        <authorList>
            <person name="Jury J.A."/>
            <person name="Perry A.C."/>
            <person name="Hall L."/>
        </authorList>
    </citation>
    <scope>NUCLEOTIDE SEQUENCE [MRNA]</scope>
    <source>
        <tissue>Epididymis</tissue>
    </source>
</reference>
<proteinExistence type="evidence at transcript level"/>
<evidence type="ECO:0000250" key="1"/>
<evidence type="ECO:0000255" key="2"/>
<evidence type="ECO:0000255" key="3">
    <source>
        <dbReference type="PROSITE-ProRule" id="PRU00068"/>
    </source>
</evidence>
<evidence type="ECO:0000255" key="4">
    <source>
        <dbReference type="PROSITE-ProRule" id="PRU00076"/>
    </source>
</evidence>
<evidence type="ECO:0000255" key="5">
    <source>
        <dbReference type="PROSITE-ProRule" id="PRU00276"/>
    </source>
</evidence>
<evidence type="ECO:0000255" key="6">
    <source>
        <dbReference type="PROSITE-ProRule" id="PRU10095"/>
    </source>
</evidence>
<evidence type="ECO:0000256" key="7">
    <source>
        <dbReference type="SAM" id="MobiDB-lite"/>
    </source>
</evidence>
<name>ADA28_MACFA</name>
<protein>
    <recommendedName>
        <fullName>Disintegrin and metalloproteinase domain-containing protein 28</fullName>
        <shortName>ADAM 28</shortName>
        <ecNumber>3.4.24.-</ecNumber>
    </recommendedName>
    <alternativeName>
        <fullName>Epididymal metalloproteinase-like, disintegrin-like, and cysteine-rich protein II</fullName>
        <shortName>eMDC II</shortName>
    </alternativeName>
</protein>
<dbReference type="EC" id="3.4.24.-"/>
<dbReference type="EMBL" id="AJ242014">
    <property type="protein sequence ID" value="CAB42090.1"/>
    <property type="molecule type" value="mRNA"/>
</dbReference>
<dbReference type="RefSeq" id="NP_001306280.1">
    <property type="nucleotide sequence ID" value="NM_001319351.1"/>
</dbReference>
<dbReference type="SMR" id="Q9XSL6"/>
<dbReference type="STRING" id="9541.ENSMFAP00000043408"/>
<dbReference type="MEROPS" id="M12.224"/>
<dbReference type="GlyCosmos" id="Q9XSL6">
    <property type="glycosylation" value="6 sites, No reported glycans"/>
</dbReference>
<dbReference type="eggNOG" id="KOG3607">
    <property type="taxonomic scope" value="Eukaryota"/>
</dbReference>
<dbReference type="Proteomes" id="UP000233100">
    <property type="component" value="Unplaced"/>
</dbReference>
<dbReference type="GO" id="GO:0005886">
    <property type="term" value="C:plasma membrane"/>
    <property type="evidence" value="ECO:0007669"/>
    <property type="project" value="TreeGrafter"/>
</dbReference>
<dbReference type="GO" id="GO:0046872">
    <property type="term" value="F:metal ion binding"/>
    <property type="evidence" value="ECO:0007669"/>
    <property type="project" value="UniProtKB-KW"/>
</dbReference>
<dbReference type="GO" id="GO:0004222">
    <property type="term" value="F:metalloendopeptidase activity"/>
    <property type="evidence" value="ECO:0007669"/>
    <property type="project" value="InterPro"/>
</dbReference>
<dbReference type="GO" id="GO:0006508">
    <property type="term" value="P:proteolysis"/>
    <property type="evidence" value="ECO:0007669"/>
    <property type="project" value="UniProtKB-KW"/>
</dbReference>
<dbReference type="CDD" id="cd04269">
    <property type="entry name" value="ZnMc_adamalysin_II_like"/>
    <property type="match status" value="1"/>
</dbReference>
<dbReference type="FunFam" id="3.40.390.10:FF:000002">
    <property type="entry name" value="Disintegrin and metalloproteinase domain-containing protein 22"/>
    <property type="match status" value="1"/>
</dbReference>
<dbReference type="FunFam" id="4.10.70.10:FF:000001">
    <property type="entry name" value="Disintegrin and metalloproteinase domain-containing protein 22"/>
    <property type="match status" value="1"/>
</dbReference>
<dbReference type="Gene3D" id="3.40.390.10">
    <property type="entry name" value="Collagenase (Catalytic Domain)"/>
    <property type="match status" value="1"/>
</dbReference>
<dbReference type="Gene3D" id="4.10.70.10">
    <property type="entry name" value="Disintegrin domain"/>
    <property type="match status" value="1"/>
</dbReference>
<dbReference type="InterPro" id="IPR006586">
    <property type="entry name" value="ADAM_Cys-rich"/>
</dbReference>
<dbReference type="InterPro" id="IPR018358">
    <property type="entry name" value="Disintegrin_CS"/>
</dbReference>
<dbReference type="InterPro" id="IPR001762">
    <property type="entry name" value="Disintegrin_dom"/>
</dbReference>
<dbReference type="InterPro" id="IPR036436">
    <property type="entry name" value="Disintegrin_dom_sf"/>
</dbReference>
<dbReference type="InterPro" id="IPR000742">
    <property type="entry name" value="EGF-like_dom"/>
</dbReference>
<dbReference type="InterPro" id="IPR024079">
    <property type="entry name" value="MetalloPept_cat_dom_sf"/>
</dbReference>
<dbReference type="InterPro" id="IPR001590">
    <property type="entry name" value="Peptidase_M12B"/>
</dbReference>
<dbReference type="InterPro" id="IPR002870">
    <property type="entry name" value="Peptidase_M12B_N"/>
</dbReference>
<dbReference type="InterPro" id="IPR034027">
    <property type="entry name" value="Reprolysin_adamalysin"/>
</dbReference>
<dbReference type="PANTHER" id="PTHR11905">
    <property type="entry name" value="ADAM A DISINTEGRIN AND METALLOPROTEASE DOMAIN"/>
    <property type="match status" value="1"/>
</dbReference>
<dbReference type="PANTHER" id="PTHR11905:SF32">
    <property type="entry name" value="DISINTEGRIN AND METALLOPROTEINASE DOMAIN-CONTAINING PROTEIN 28"/>
    <property type="match status" value="1"/>
</dbReference>
<dbReference type="Pfam" id="PF08516">
    <property type="entry name" value="ADAM_CR"/>
    <property type="match status" value="1"/>
</dbReference>
<dbReference type="Pfam" id="PF00200">
    <property type="entry name" value="Disintegrin"/>
    <property type="match status" value="1"/>
</dbReference>
<dbReference type="Pfam" id="PF01562">
    <property type="entry name" value="Pep_M12B_propep"/>
    <property type="match status" value="1"/>
</dbReference>
<dbReference type="Pfam" id="PF01421">
    <property type="entry name" value="Reprolysin"/>
    <property type="match status" value="1"/>
</dbReference>
<dbReference type="PRINTS" id="PR00289">
    <property type="entry name" value="DISINTEGRIN"/>
</dbReference>
<dbReference type="SMART" id="SM00608">
    <property type="entry name" value="ACR"/>
    <property type="match status" value="1"/>
</dbReference>
<dbReference type="SMART" id="SM00050">
    <property type="entry name" value="DISIN"/>
    <property type="match status" value="1"/>
</dbReference>
<dbReference type="SUPFAM" id="SSF57552">
    <property type="entry name" value="Blood coagulation inhibitor (disintegrin)"/>
    <property type="match status" value="1"/>
</dbReference>
<dbReference type="SUPFAM" id="SSF55486">
    <property type="entry name" value="Metalloproteases ('zincins'), catalytic domain"/>
    <property type="match status" value="1"/>
</dbReference>
<dbReference type="PROSITE" id="PS50215">
    <property type="entry name" value="ADAM_MEPRO"/>
    <property type="match status" value="1"/>
</dbReference>
<dbReference type="PROSITE" id="PS00427">
    <property type="entry name" value="DISINTEGRIN_1"/>
    <property type="match status" value="1"/>
</dbReference>
<dbReference type="PROSITE" id="PS50214">
    <property type="entry name" value="DISINTEGRIN_2"/>
    <property type="match status" value="1"/>
</dbReference>
<dbReference type="PROSITE" id="PS01186">
    <property type="entry name" value="EGF_2"/>
    <property type="match status" value="1"/>
</dbReference>
<dbReference type="PROSITE" id="PS50026">
    <property type="entry name" value="EGF_3"/>
    <property type="match status" value="1"/>
</dbReference>
<dbReference type="PROSITE" id="PS00142">
    <property type="entry name" value="ZINC_PROTEASE"/>
    <property type="match status" value="1"/>
</dbReference>
<accession>Q9XSL6</accession>
<organism>
    <name type="scientific">Macaca fascicularis</name>
    <name type="common">Crab-eating macaque</name>
    <name type="synonym">Cynomolgus monkey</name>
    <dbReference type="NCBI Taxonomy" id="9541"/>
    <lineage>
        <taxon>Eukaryota</taxon>
        <taxon>Metazoa</taxon>
        <taxon>Chordata</taxon>
        <taxon>Craniata</taxon>
        <taxon>Vertebrata</taxon>
        <taxon>Euteleostomi</taxon>
        <taxon>Mammalia</taxon>
        <taxon>Eutheria</taxon>
        <taxon>Euarchontoglires</taxon>
        <taxon>Primates</taxon>
        <taxon>Haplorrhini</taxon>
        <taxon>Catarrhini</taxon>
        <taxon>Cercopithecidae</taxon>
        <taxon>Cercopithecinae</taxon>
        <taxon>Macaca</taxon>
    </lineage>
</organism>
<feature type="signal peptide" evidence="2">
    <location>
        <begin position="1"/>
        <end position="19"/>
    </location>
</feature>
<feature type="propeptide" id="PRO_0000029130" evidence="1">
    <location>
        <begin position="20"/>
        <end position="193"/>
    </location>
</feature>
<feature type="chain" id="PRO_0000029131" description="Disintegrin and metalloproteinase domain-containing protein 28">
    <location>
        <begin position="194"/>
        <end position="776"/>
    </location>
</feature>
<feature type="topological domain" description="Extracellular" evidence="2">
    <location>
        <begin position="194"/>
        <end position="666"/>
    </location>
</feature>
<feature type="transmembrane region" description="Helical" evidence="2">
    <location>
        <begin position="667"/>
        <end position="687"/>
    </location>
</feature>
<feature type="topological domain" description="Cytoplasmic" evidence="2">
    <location>
        <begin position="688"/>
        <end position="776"/>
    </location>
</feature>
<feature type="domain" description="Peptidase M12B" evidence="5">
    <location>
        <begin position="204"/>
        <end position="400"/>
    </location>
</feature>
<feature type="domain" description="Disintegrin" evidence="3">
    <location>
        <begin position="408"/>
        <end position="494"/>
    </location>
</feature>
<feature type="domain" description="EGF-like" evidence="4">
    <location>
        <begin position="626"/>
        <end position="658"/>
    </location>
</feature>
<feature type="region of interest" description="Disordered" evidence="7">
    <location>
        <begin position="691"/>
        <end position="728"/>
    </location>
</feature>
<feature type="region of interest" description="Disordered" evidence="7">
    <location>
        <begin position="746"/>
        <end position="776"/>
    </location>
</feature>
<feature type="short sequence motif" description="Cysteine switch" evidence="1">
    <location>
        <begin position="168"/>
        <end position="175"/>
    </location>
</feature>
<feature type="compositionally biased region" description="Basic and acidic residues" evidence="7">
    <location>
        <begin position="691"/>
        <end position="701"/>
    </location>
</feature>
<feature type="compositionally biased region" description="Basic residues" evidence="7">
    <location>
        <begin position="709"/>
        <end position="718"/>
    </location>
</feature>
<feature type="active site" evidence="5 6">
    <location>
        <position position="341"/>
    </location>
</feature>
<feature type="binding site" description="in inhibited form" evidence="1">
    <location>
        <position position="170"/>
    </location>
    <ligand>
        <name>Zn(2+)</name>
        <dbReference type="ChEBI" id="CHEBI:29105"/>
        <note>catalytic</note>
    </ligand>
</feature>
<feature type="binding site" evidence="1">
    <location>
        <position position="340"/>
    </location>
    <ligand>
        <name>Zn(2+)</name>
        <dbReference type="ChEBI" id="CHEBI:29105"/>
        <note>catalytic</note>
    </ligand>
</feature>
<feature type="binding site" evidence="1">
    <location>
        <position position="344"/>
    </location>
    <ligand>
        <name>Zn(2+)</name>
        <dbReference type="ChEBI" id="CHEBI:29105"/>
        <note>catalytic</note>
    </ligand>
</feature>
<feature type="binding site" evidence="1">
    <location>
        <position position="350"/>
    </location>
    <ligand>
        <name>Zn(2+)</name>
        <dbReference type="ChEBI" id="CHEBI:29105"/>
        <note>catalytic</note>
    </ligand>
</feature>
<feature type="glycosylation site" description="N-linked (GlcNAc...) asparagine" evidence="2">
    <location>
        <position position="268"/>
    </location>
</feature>
<feature type="glycosylation site" description="N-linked (GlcNAc...) asparagine" evidence="2">
    <location>
        <position position="275"/>
    </location>
</feature>
<feature type="glycosylation site" description="N-linked (GlcNAc...) asparagine" evidence="2">
    <location>
        <position position="352"/>
    </location>
</feature>
<feature type="glycosylation site" description="N-linked (GlcNAc...) asparagine" evidence="2">
    <location>
        <position position="558"/>
    </location>
</feature>
<feature type="glycosylation site" description="N-linked (GlcNAc...) asparagine" evidence="2">
    <location>
        <position position="603"/>
    </location>
</feature>
<feature type="glycosylation site" description="N-linked (GlcNAc...) asparagine" evidence="2">
    <location>
        <position position="629"/>
    </location>
</feature>
<feature type="disulfide bond" evidence="1">
    <location>
        <begin position="315"/>
        <end position="395"/>
    </location>
</feature>
<feature type="disulfide bond" evidence="1">
    <location>
        <begin position="355"/>
        <end position="379"/>
    </location>
</feature>
<feature type="disulfide bond" evidence="1">
    <location>
        <begin position="357"/>
        <end position="362"/>
    </location>
</feature>
<feature type="disulfide bond" evidence="1">
    <location>
        <begin position="466"/>
        <end position="486"/>
    </location>
</feature>
<feature type="disulfide bond" evidence="1">
    <location>
        <begin position="630"/>
        <end position="640"/>
    </location>
</feature>
<feature type="disulfide bond" evidence="1">
    <location>
        <begin position="634"/>
        <end position="646"/>
    </location>
</feature>
<feature type="disulfide bond" evidence="1">
    <location>
        <begin position="648"/>
        <end position="657"/>
    </location>
</feature>